<sequence>MEAANEVVNLFASQATTPSSLDAVTTLETVSTPTFIFPEVSDSQILQLMPATLYSGMNWLRDHLDGFSLLALSGCIFVSVLYLVHIIAFFYSIYRLHHKVEPDPTLPGVSVIKPIVGTDKNLYQNLESFFTSQYHSFELLFCFHSEEDEAIEVVRSLIKKHPNIEAKILFEGEPVGMNPKVNNMMPAYRAARYPLVLISDSAIFMRPDGILDMATTMMSHEKMASVTQIPYCKDRQGFHAAFEQIFFGTSHARLYLVGNFLGVVCSSGMSSMMKKSALDECGGMEKFGEYLAEDYFFAKALTSRGCKAAISTHPALQNSASVTVLSFFNRIGRWIKLRIAMMPHLMVVEPLQDCVTSGLIMAFGLNYLGGYSVYKTFGLHLFYWIVMDFSLMTSMQNGKFNFTPFLFVFIWLFREFTSPFIFIKAVLAPTIVWRNNKFKLSWGGRIRTSKNSQKVPEAVSLSKGAV</sequence>
<name>CGT1_CAEEL</name>
<evidence type="ECO:0000250" key="1">
    <source>
        <dbReference type="UniProtKB" id="Q9R0E0"/>
    </source>
</evidence>
<evidence type="ECO:0000255" key="2"/>
<evidence type="ECO:0000269" key="3">
    <source>
    </source>
</evidence>
<evidence type="ECO:0000269" key="4">
    <source>
    </source>
</evidence>
<evidence type="ECO:0000269" key="5">
    <source>
    </source>
</evidence>
<evidence type="ECO:0000269" key="6">
    <source>
    </source>
</evidence>
<evidence type="ECO:0000303" key="7">
    <source>
    </source>
</evidence>
<evidence type="ECO:0000303" key="8">
    <source>
    </source>
</evidence>
<evidence type="ECO:0000305" key="9"/>
<evidence type="ECO:0000305" key="10">
    <source>
    </source>
</evidence>
<evidence type="ECO:0000305" key="11">
    <source>
    </source>
</evidence>
<evidence type="ECO:0000312" key="12">
    <source>
        <dbReference type="WormBase" id="T06C12.10"/>
    </source>
</evidence>
<proteinExistence type="evidence at protein level"/>
<accession>O18037</accession>
<organism>
    <name type="scientific">Caenorhabditis elegans</name>
    <dbReference type="NCBI Taxonomy" id="6239"/>
    <lineage>
        <taxon>Eukaryota</taxon>
        <taxon>Metazoa</taxon>
        <taxon>Ecdysozoa</taxon>
        <taxon>Nematoda</taxon>
        <taxon>Chromadorea</taxon>
        <taxon>Rhabditida</taxon>
        <taxon>Rhabditina</taxon>
        <taxon>Rhabditomorpha</taxon>
        <taxon>Rhabditoidea</taxon>
        <taxon>Rhabditidae</taxon>
        <taxon>Peloderinae</taxon>
        <taxon>Caenorhabditis</taxon>
    </lineage>
</organism>
<feature type="chain" id="PRO_0000421281" description="Ceramide glucosyltransferase 1">
    <location>
        <begin position="1"/>
        <end position="466"/>
    </location>
</feature>
<feature type="transmembrane region" description="Helical" evidence="2">
    <location>
        <begin position="70"/>
        <end position="90"/>
    </location>
</feature>
<feature type="transmembrane region" description="Helical" evidence="2">
    <location>
        <begin position="354"/>
        <end position="374"/>
    </location>
</feature>
<feature type="transmembrane region" description="Helical" evidence="2">
    <location>
        <begin position="403"/>
        <end position="423"/>
    </location>
</feature>
<feature type="short sequence motif" description="D1" evidence="9">
    <location>
        <position position="148"/>
    </location>
</feature>
<feature type="short sequence motif" description="D2" evidence="9">
    <location>
        <position position="200"/>
    </location>
</feature>
<feature type="short sequence motif" description="D3" evidence="9">
    <location>
        <position position="294"/>
    </location>
</feature>
<feature type="short sequence motif" description="(Q/R)XXRW" evidence="9">
    <location>
        <begin position="330"/>
        <end position="334"/>
    </location>
</feature>
<feature type="active site" description="Proton acceptor" evidence="1">
    <location>
        <position position="294"/>
    </location>
</feature>
<dbReference type="EC" id="2.4.1.80" evidence="4"/>
<dbReference type="EMBL" id="BX284605">
    <property type="protein sequence ID" value="CAB03296.2"/>
    <property type="molecule type" value="Genomic_DNA"/>
</dbReference>
<dbReference type="PIR" id="T24561">
    <property type="entry name" value="T24561"/>
</dbReference>
<dbReference type="RefSeq" id="NP_506971.2">
    <property type="nucleotide sequence ID" value="NM_074570.4"/>
</dbReference>
<dbReference type="SMR" id="O18037"/>
<dbReference type="FunCoup" id="O18037">
    <property type="interactions" value="922"/>
</dbReference>
<dbReference type="STRING" id="6239.T06C12.10.1"/>
<dbReference type="SwissLipids" id="SLP:000000021"/>
<dbReference type="CAZy" id="GT21">
    <property type="family name" value="Glycosyltransferase Family 21"/>
</dbReference>
<dbReference type="PaxDb" id="6239-T06C12.10"/>
<dbReference type="EnsemblMetazoa" id="T06C12.10.1">
    <property type="protein sequence ID" value="T06C12.10.1"/>
    <property type="gene ID" value="WBGene00011517"/>
</dbReference>
<dbReference type="GeneID" id="188169"/>
<dbReference type="KEGG" id="cel:CELE_T06C12.10"/>
<dbReference type="UCSC" id="T06C12.10.1">
    <property type="organism name" value="c. elegans"/>
</dbReference>
<dbReference type="AGR" id="WB:WBGene00011517"/>
<dbReference type="CTD" id="188169"/>
<dbReference type="WormBase" id="T06C12.10">
    <property type="protein sequence ID" value="CE31986"/>
    <property type="gene ID" value="WBGene00011517"/>
    <property type="gene designation" value="cgt-1"/>
</dbReference>
<dbReference type="eggNOG" id="KOG2547">
    <property type="taxonomic scope" value="Eukaryota"/>
</dbReference>
<dbReference type="GeneTree" id="ENSGT00390000012898"/>
<dbReference type="HOGENOM" id="CLU_030898_0_0_1"/>
<dbReference type="InParanoid" id="O18037"/>
<dbReference type="OMA" id="HELRWNR"/>
<dbReference type="OrthoDB" id="1483400at2759"/>
<dbReference type="PhylomeDB" id="O18037"/>
<dbReference type="UniPathway" id="UPA00222"/>
<dbReference type="PRO" id="PR:O18037"/>
<dbReference type="Proteomes" id="UP000001940">
    <property type="component" value="Chromosome V"/>
</dbReference>
<dbReference type="Bgee" id="WBGene00011517">
    <property type="expression patterns" value="Expressed in pharyngeal muscle cell (C elegans) and 3 other cell types or tissues"/>
</dbReference>
<dbReference type="GO" id="GO:0016020">
    <property type="term" value="C:membrane"/>
    <property type="evidence" value="ECO:0000318"/>
    <property type="project" value="GO_Central"/>
</dbReference>
<dbReference type="GO" id="GO:0008120">
    <property type="term" value="F:ceramide glucosyltransferase activity"/>
    <property type="evidence" value="ECO:0000318"/>
    <property type="project" value="GO_Central"/>
</dbReference>
<dbReference type="GO" id="GO:0006679">
    <property type="term" value="P:glucosylceramide biosynthetic process"/>
    <property type="evidence" value="ECO:0000316"/>
    <property type="project" value="WormBase"/>
</dbReference>
<dbReference type="GO" id="GO:0002119">
    <property type="term" value="P:nematode larval development"/>
    <property type="evidence" value="ECO:0000316"/>
    <property type="project" value="WormBase"/>
</dbReference>
<dbReference type="GO" id="GO:1904508">
    <property type="term" value="P:regulation of protein localization to basolateral plasma membrane"/>
    <property type="evidence" value="ECO:0000316"/>
    <property type="project" value="WormBase"/>
</dbReference>
<dbReference type="CDD" id="cd02520">
    <property type="entry name" value="Glucosylceramide_synthase"/>
    <property type="match status" value="1"/>
</dbReference>
<dbReference type="FunFam" id="3.90.550.10:FF:000207">
    <property type="entry name" value="Ceramide glucosyltransferase 1"/>
    <property type="match status" value="1"/>
</dbReference>
<dbReference type="Gene3D" id="3.90.550.10">
    <property type="entry name" value="Spore Coat Polysaccharide Biosynthesis Protein SpsA, Chain A"/>
    <property type="match status" value="1"/>
</dbReference>
<dbReference type="InterPro" id="IPR025993">
    <property type="entry name" value="Ceramide_glucosylTrfase"/>
</dbReference>
<dbReference type="InterPro" id="IPR029044">
    <property type="entry name" value="Nucleotide-diphossugar_trans"/>
</dbReference>
<dbReference type="PANTHER" id="PTHR12726">
    <property type="entry name" value="CERAMIDE GLUCOSYLTRANSFERASE"/>
    <property type="match status" value="1"/>
</dbReference>
<dbReference type="PANTHER" id="PTHR12726:SF1">
    <property type="entry name" value="CERAMIDE GLUCOSYLTRANSFERASE 1-RELATED"/>
    <property type="match status" value="1"/>
</dbReference>
<dbReference type="Pfam" id="PF13506">
    <property type="entry name" value="Glyco_transf_21"/>
    <property type="match status" value="1"/>
</dbReference>
<dbReference type="SUPFAM" id="SSF53448">
    <property type="entry name" value="Nucleotide-diphospho-sugar transferases"/>
    <property type="match status" value="1"/>
</dbReference>
<comment type="function">
    <text evidence="3 4 5 6">Catalyzes the first glycosylation step in glycosphingolipid biosynthesis, the transfer of glucose to ceramide to produce glucosylceramides (GlcCer). GlcCer are known to contribute to the physical properties and physiological functions of membranes and may regulate signal transduction (PubMed:19240113, PubMed:21325339). Only branched-chain sphingoid bases like 15-methylhexadecasphing-4-enine are used for generating complex sphingolipids in Caenorhabditis elegans (PubMed:7651085). Together with cgt-3, plays a role in the trafficking of proteins such as mig-14 to the cell membrane in intestinal cells (PubMed:26115433).</text>
</comment>
<comment type="catalytic activity">
    <reaction evidence="4">
        <text>an N-acylsphing-4-enine + UDP-alpha-D-glucose = a beta-D-glucosyl-(1&lt;-&gt;1')-N-acylsphing-4-enine + UDP + H(+)</text>
        <dbReference type="Rhea" id="RHEA:12088"/>
        <dbReference type="ChEBI" id="CHEBI:15378"/>
        <dbReference type="ChEBI" id="CHEBI:22801"/>
        <dbReference type="ChEBI" id="CHEBI:52639"/>
        <dbReference type="ChEBI" id="CHEBI:58223"/>
        <dbReference type="ChEBI" id="CHEBI:58885"/>
        <dbReference type="EC" id="2.4.1.80"/>
    </reaction>
    <physiologicalReaction direction="left-to-right" evidence="4">
        <dbReference type="Rhea" id="RHEA:12089"/>
    </physiologicalReaction>
</comment>
<comment type="catalytic activity">
    <reaction evidence="10 11">
        <text>an N-acyl-15-methylhexadecasphing-4-enine + UDP-alpha-D-glucose = an N-acyl-1-beta-D-glucosyl-15-methylhexadecasphing-4-enine + UDP + H(+)</text>
        <dbReference type="Rhea" id="RHEA:34611"/>
        <dbReference type="ChEBI" id="CHEBI:15378"/>
        <dbReference type="ChEBI" id="CHEBI:58223"/>
        <dbReference type="ChEBI" id="CHEBI:58885"/>
        <dbReference type="ChEBI" id="CHEBI:70815"/>
        <dbReference type="ChEBI" id="CHEBI:70846"/>
    </reaction>
    <physiologicalReaction direction="left-to-right" evidence="10 11">
        <dbReference type="Rhea" id="RHEA:34612"/>
    </physiologicalReaction>
</comment>
<comment type="pathway">
    <text evidence="3 4">Lipid metabolism; sphingolipid metabolism.</text>
</comment>
<comment type="subcellular location">
    <subcellularLocation>
        <location evidence="9">Membrane</location>
        <topology evidence="9">Multi-pass membrane protein</topology>
    </subcellularLocation>
</comment>
<comment type="tissue specificity">
    <text evidence="10 11">Expressed in excretory canals, pharyngeal intestinal valve, intestine and intestinal rectal valve.</text>
</comment>
<comment type="domain">
    <text evidence="1">The D1, D2, D3, (Q/R)XXRW motif is a critical part of the GCS active site, involved in catalysis and UDP-sugar binding.</text>
</comment>
<comment type="disruption phenotype">
    <text evidence="3 4 5">Knockdown of cgt-1 alone reduces brood size, while simultaneous knockdown of cgt-3 and cgt-1 results in a larval stage death (L1 lethal) phenotype (PubMed:19240113, PubMed:21325339). Double RNAi-mediated knockdown together with cgt-3 reduces the rate of development and restores the basolateral cell membrane localization of mig-14 in intestinal cells in a sgk-1 ok538 mutant background (PubMed:26115433).</text>
</comment>
<comment type="similarity">
    <text evidence="9">Belongs to the glycosyltransferase 2 family.</text>
</comment>
<protein>
    <recommendedName>
        <fullName>Ceramide glucosyltransferase 1</fullName>
        <shortName evidence="7 8">CGT-1</shortName>
        <ecNumber evidence="4">2.4.1.80</ecNumber>
    </recommendedName>
</protein>
<keyword id="KW-0328">Glycosyltransferase</keyword>
<keyword id="KW-0444">Lipid biosynthesis</keyword>
<keyword id="KW-0443">Lipid metabolism</keyword>
<keyword id="KW-0472">Membrane</keyword>
<keyword id="KW-1185">Reference proteome</keyword>
<keyword id="KW-0746">Sphingolipid metabolism</keyword>
<keyword id="KW-0808">Transferase</keyword>
<keyword id="KW-0812">Transmembrane</keyword>
<keyword id="KW-1133">Transmembrane helix</keyword>
<reference key="1">
    <citation type="journal article" date="1998" name="Science">
        <title>Genome sequence of the nematode C. elegans: a platform for investigating biology.</title>
        <authorList>
            <consortium name="The C. elegans sequencing consortium"/>
        </authorList>
    </citation>
    <scope>NUCLEOTIDE SEQUENCE [LARGE SCALE GENOMIC DNA]</scope>
    <source>
        <strain>Bristol N2</strain>
    </source>
</reference>
<reference key="2">
    <citation type="journal article" date="1995" name="Lipids">
        <title>The glycosylceramides of the nematode Caenorhabditis elegans contain an unusual, branched-chain sphingoid base.</title>
        <authorList>
            <person name="Chitwood D.J."/>
            <person name="Lusby W.R."/>
            <person name="Thompson M.J."/>
            <person name="Kochansky J.P."/>
            <person name="Howarth O.W."/>
        </authorList>
    </citation>
    <scope>FUNCTION</scope>
</reference>
<reference key="3">
    <citation type="journal article" date="2009" name="J. Cell Sci.">
        <title>Expression of ceramide glucosyltransferases, which are essential for glycosphingolipid synthesis, is only required in a small subset of C. elegans cells.</title>
        <authorList>
            <person name="Marza E."/>
            <person name="Simonsen K.T."/>
            <person name="Faergeman N.J."/>
            <person name="Lesa G.M."/>
        </authorList>
    </citation>
    <scope>FUNCTION</scope>
    <scope>CATALYTIC ACTIVITY</scope>
    <scope>TISSUE SPECIFICITY</scope>
    <scope>DISRUPTION PHENOTYPE</scope>
    <scope>PATHWAY</scope>
</reference>
<reference key="4">
    <citation type="journal article" date="2011" name="Glycobiology">
        <title>Ceramide glucosyltransferase of the nematode Caenorhabditis elegans is involved in oocyte formation and in early embryonic cell division.</title>
        <authorList>
            <person name="Nomura K.H."/>
            <person name="Murata D."/>
            <person name="Hayashi Y."/>
            <person name="Dejima K."/>
            <person name="Mizuguchi S."/>
            <person name="Kage-Nakadai E."/>
            <person name="Gengyo-Ando K."/>
            <person name="Mitani S."/>
            <person name="Hirabayashi Y."/>
            <person name="Ito M."/>
            <person name="Nomura K."/>
        </authorList>
    </citation>
    <scope>FUNCTION</scope>
    <scope>CATALYTIC ACTIVITY</scope>
    <scope>PATHWAY</scope>
    <scope>DISRUPTION PHENOTYPE</scope>
    <scope>TISSUE SPECIFICITY</scope>
</reference>
<reference key="5">
    <citation type="journal article" date="2015" name="PLoS ONE">
        <title>Serum- and Glucocorticoid-Inducible Kinase-1 (SGK-1) Plays a Role in Membrane Trafficking in Caenorhabditis elegans.</title>
        <authorList>
            <person name="Zhu M."/>
            <person name="Wu G."/>
            <person name="Li Y.X."/>
            <person name="Stevens J.K."/>
            <person name="Fan C.X."/>
            <person name="Spang A."/>
            <person name="Dong M.Q."/>
        </authorList>
    </citation>
    <scope>FUNCTION</scope>
    <scope>DISRUPTION PHENOTYPE</scope>
</reference>
<reference key="6">
    <citation type="journal article" date="2016" name="PLoS ONE">
        <title>Correction: Serum- and Glucocorticoid-Inducible Kinase-1 (SGK-1) Plays a Role in Membrane Trafficking in Caenorhabditis elegans.</title>
        <authorList>
            <person name="Zhu M."/>
            <person name="Wu G."/>
            <person name="Li Y.X."/>
            <person name="Stevens J.K."/>
            <person name="Fan C.X."/>
            <person name="Spang A."/>
            <person name="Dong M.Q."/>
        </authorList>
    </citation>
    <scope>ERRATUM OF PUBMED:26115433</scope>
</reference>
<gene>
    <name evidence="12" type="primary">cgt-1</name>
    <name evidence="12" type="synonym">tag-217</name>
    <name evidence="12" type="ORF">T06C12.10</name>
</gene>